<dbReference type="EMBL" id="EU497918">
    <property type="protein sequence ID" value="ACC99423.1"/>
    <property type="molecule type" value="mRNA"/>
</dbReference>
<dbReference type="EMBL" id="AK129367">
    <property type="protein sequence ID" value="BAC98177.1"/>
    <property type="status" value="ALT_INIT"/>
    <property type="molecule type" value="mRNA"/>
</dbReference>
<dbReference type="EMBL" id="BC059068">
    <property type="protein sequence ID" value="AAH59068.1"/>
    <property type="molecule type" value="mRNA"/>
</dbReference>
<dbReference type="EMBL" id="BC096531">
    <property type="protein sequence ID" value="AAH96531.1"/>
    <property type="molecule type" value="mRNA"/>
</dbReference>
<dbReference type="CCDS" id="CCDS23238.1"/>
<dbReference type="RefSeq" id="NP_001155007.1">
    <property type="nucleotide sequence ID" value="NM_001161535.1"/>
</dbReference>
<dbReference type="RefSeq" id="NP_001155008.1">
    <property type="nucleotide sequence ID" value="NM_001161536.1"/>
</dbReference>
<dbReference type="RefSeq" id="NP_001155009.1">
    <property type="nucleotide sequence ID" value="NM_001161537.1"/>
</dbReference>
<dbReference type="RefSeq" id="NP_001155010.1">
    <property type="nucleotide sequence ID" value="NM_001161538.1"/>
</dbReference>
<dbReference type="RefSeq" id="NP_001155011.1">
    <property type="nucleotide sequence ID" value="NM_001161539.1"/>
</dbReference>
<dbReference type="RefSeq" id="NP_001155012.1">
    <property type="nucleotide sequence ID" value="NM_001161540.1"/>
</dbReference>
<dbReference type="RefSeq" id="NP_001155013.1">
    <property type="nucleotide sequence ID" value="NM_001161541.1"/>
</dbReference>
<dbReference type="RefSeq" id="NP_796167.2">
    <property type="nucleotide sequence ID" value="NM_177193.5"/>
</dbReference>
<dbReference type="RefSeq" id="XP_006511292.1">
    <property type="nucleotide sequence ID" value="XM_006511229.4"/>
</dbReference>
<dbReference type="RefSeq" id="XP_006511293.1">
    <property type="nucleotide sequence ID" value="XM_006511230.3"/>
</dbReference>
<dbReference type="RefSeq" id="XP_006511294.1">
    <property type="nucleotide sequence ID" value="XM_006511231.5"/>
</dbReference>
<dbReference type="RefSeq" id="XP_006511295.1">
    <property type="nucleotide sequence ID" value="XM_006511232.4"/>
</dbReference>
<dbReference type="RefSeq" id="XP_006511296.1">
    <property type="nucleotide sequence ID" value="XM_006511233.2"/>
</dbReference>
<dbReference type="RefSeq" id="XP_006511297.1">
    <property type="nucleotide sequence ID" value="XM_006511234.5"/>
</dbReference>
<dbReference type="RefSeq" id="XP_030100277.1">
    <property type="nucleotide sequence ID" value="XM_030244417.1"/>
</dbReference>
<dbReference type="RefSeq" id="XP_030100278.1">
    <property type="nucleotide sequence ID" value="XM_030244418.2"/>
</dbReference>
<dbReference type="RefSeq" id="XP_030100279.1">
    <property type="nucleotide sequence ID" value="XM_030244419.2"/>
</dbReference>
<dbReference type="RefSeq" id="XP_036010954.1">
    <property type="nucleotide sequence ID" value="XM_036155061.1"/>
</dbReference>
<dbReference type="RefSeq" id="XP_036010955.1">
    <property type="nucleotide sequence ID" value="XM_036155062.1"/>
</dbReference>
<dbReference type="RefSeq" id="XP_036010956.1">
    <property type="nucleotide sequence ID" value="XM_036155063.1"/>
</dbReference>
<dbReference type="RefSeq" id="XP_036010957.1">
    <property type="nucleotide sequence ID" value="XM_036155064.1"/>
</dbReference>
<dbReference type="RefSeq" id="XP_036010958.1">
    <property type="nucleotide sequence ID" value="XM_036155065.1"/>
</dbReference>
<dbReference type="SMR" id="Q5RKR3"/>
<dbReference type="BioGRID" id="236117">
    <property type="interactions" value="2"/>
</dbReference>
<dbReference type="FunCoup" id="Q5RKR3">
    <property type="interactions" value="68"/>
</dbReference>
<dbReference type="STRING" id="10090.ENSMUSP00000130879"/>
<dbReference type="GlyConnect" id="2380">
    <property type="glycosylation" value="3 N-Linked glycans (2 sites)"/>
</dbReference>
<dbReference type="GlyCosmos" id="Q5RKR3">
    <property type="glycosylation" value="7 sites, 3 glycans"/>
</dbReference>
<dbReference type="GlyGen" id="Q5RKR3">
    <property type="glycosylation" value="9 sites, 10 N-linked glycans (7 sites)"/>
</dbReference>
<dbReference type="iPTMnet" id="Q5RKR3"/>
<dbReference type="PhosphoSitePlus" id="Q5RKR3"/>
<dbReference type="SwissPalm" id="Q5RKR3"/>
<dbReference type="jPOST" id="Q5RKR3"/>
<dbReference type="PaxDb" id="10090-ENSMUSP00000130879"/>
<dbReference type="ProteomicsDB" id="269103"/>
<dbReference type="Antibodypedia" id="26861">
    <property type="antibodies" value="80 antibodies from 19 providers"/>
</dbReference>
<dbReference type="DNASU" id="320563"/>
<dbReference type="Ensembl" id="ENSMUST00000114144.9">
    <property type="protein sequence ID" value="ENSMUSP00000109781.3"/>
    <property type="gene ID" value="ENSMUSG00000051243.15"/>
</dbReference>
<dbReference type="Ensembl" id="ENSMUST00000163897.8">
    <property type="protein sequence ID" value="ENSMUSP00000130322.2"/>
    <property type="gene ID" value="ENSMUSG00000051243.15"/>
</dbReference>
<dbReference type="Ensembl" id="ENSMUST00000165276.2">
    <property type="protein sequence ID" value="ENSMUSP00000129328.2"/>
    <property type="gene ID" value="ENSMUSG00000051243.15"/>
</dbReference>
<dbReference type="Ensembl" id="ENSMUST00000170421.8">
    <property type="protein sequence ID" value="ENSMUSP00000127228.2"/>
    <property type="gene ID" value="ENSMUSG00000051243.15"/>
</dbReference>
<dbReference type="Ensembl" id="ENSMUST00000215950.2">
    <property type="protein sequence ID" value="ENSMUSP00000149095.2"/>
    <property type="gene ID" value="ENSMUSG00000051243.15"/>
</dbReference>
<dbReference type="GeneID" id="320563"/>
<dbReference type="KEGG" id="mmu:320563"/>
<dbReference type="UCSC" id="uc009pwm.2">
    <property type="organism name" value="mouse"/>
</dbReference>
<dbReference type="AGR" id="MGI:2444277"/>
<dbReference type="CTD" id="57611"/>
<dbReference type="MGI" id="MGI:2444277">
    <property type="gene designation" value="Islr2"/>
</dbReference>
<dbReference type="VEuPathDB" id="HostDB:ENSMUSG00000051243"/>
<dbReference type="eggNOG" id="KOG0619">
    <property type="taxonomic scope" value="Eukaryota"/>
</dbReference>
<dbReference type="GeneTree" id="ENSGT00940000162846"/>
<dbReference type="HOGENOM" id="CLU_400948_0_0_1"/>
<dbReference type="InParanoid" id="Q5RKR3"/>
<dbReference type="OMA" id="GHSMVQW"/>
<dbReference type="OrthoDB" id="2151624at2759"/>
<dbReference type="PhylomeDB" id="Q5RKR3"/>
<dbReference type="BioGRID-ORCS" id="320563">
    <property type="hits" value="5 hits in 76 CRISPR screens"/>
</dbReference>
<dbReference type="ChiTaRS" id="Islr2">
    <property type="organism name" value="mouse"/>
</dbReference>
<dbReference type="PRO" id="PR:Q5RKR3"/>
<dbReference type="Proteomes" id="UP000000589">
    <property type="component" value="Chromosome 9"/>
</dbReference>
<dbReference type="RNAct" id="Q5RKR3">
    <property type="molecule type" value="protein"/>
</dbReference>
<dbReference type="Bgee" id="ENSMUSG00000051243">
    <property type="expression patterns" value="Expressed in cortical plate and 112 other cell types or tissues"/>
</dbReference>
<dbReference type="ExpressionAtlas" id="Q5RKR3">
    <property type="expression patterns" value="baseline and differential"/>
</dbReference>
<dbReference type="GO" id="GO:0009986">
    <property type="term" value="C:cell surface"/>
    <property type="evidence" value="ECO:0000314"/>
    <property type="project" value="UniProtKB"/>
</dbReference>
<dbReference type="GO" id="GO:0005886">
    <property type="term" value="C:plasma membrane"/>
    <property type="evidence" value="ECO:0007669"/>
    <property type="project" value="UniProtKB-SubCell"/>
</dbReference>
<dbReference type="GO" id="GO:0007399">
    <property type="term" value="P:nervous system development"/>
    <property type="evidence" value="ECO:0007669"/>
    <property type="project" value="UniProtKB-KW"/>
</dbReference>
<dbReference type="GO" id="GO:0045773">
    <property type="term" value="P:positive regulation of axon extension"/>
    <property type="evidence" value="ECO:0000315"/>
    <property type="project" value="UniProtKB"/>
</dbReference>
<dbReference type="FunFam" id="2.60.40.10:FF:001899">
    <property type="entry name" value="Immunoglobulin superfamily containing leucine rich repeat 2"/>
    <property type="match status" value="1"/>
</dbReference>
<dbReference type="FunFam" id="3.80.10.10:FF:000058">
    <property type="entry name" value="immunoglobulin superfamily containing leucine-rich repeat protein 2"/>
    <property type="match status" value="1"/>
</dbReference>
<dbReference type="Gene3D" id="2.60.40.10">
    <property type="entry name" value="Immunoglobulins"/>
    <property type="match status" value="1"/>
</dbReference>
<dbReference type="Gene3D" id="3.80.10.10">
    <property type="entry name" value="Ribonuclease Inhibitor"/>
    <property type="match status" value="1"/>
</dbReference>
<dbReference type="InterPro" id="IPR000483">
    <property type="entry name" value="Cys-rich_flank_reg_C"/>
</dbReference>
<dbReference type="InterPro" id="IPR007110">
    <property type="entry name" value="Ig-like_dom"/>
</dbReference>
<dbReference type="InterPro" id="IPR036179">
    <property type="entry name" value="Ig-like_dom_sf"/>
</dbReference>
<dbReference type="InterPro" id="IPR013783">
    <property type="entry name" value="Ig-like_fold"/>
</dbReference>
<dbReference type="InterPro" id="IPR001611">
    <property type="entry name" value="Leu-rich_rpt"/>
</dbReference>
<dbReference type="InterPro" id="IPR003591">
    <property type="entry name" value="Leu-rich_rpt_typical-subtyp"/>
</dbReference>
<dbReference type="InterPro" id="IPR032675">
    <property type="entry name" value="LRR_dom_sf"/>
</dbReference>
<dbReference type="PANTHER" id="PTHR24366">
    <property type="entry name" value="IG(IMMUNOGLOBULIN) AND LRR(LEUCINE RICH REPEAT) DOMAINS"/>
    <property type="match status" value="1"/>
</dbReference>
<dbReference type="PANTHER" id="PTHR24366:SF15">
    <property type="entry name" value="IMMUNOGLOBULIN SUPERFAMILY CONTAINING LEUCINE-RICH REPEAT PROTEIN 2"/>
    <property type="match status" value="1"/>
</dbReference>
<dbReference type="Pfam" id="PF13855">
    <property type="entry name" value="LRR_8"/>
    <property type="match status" value="2"/>
</dbReference>
<dbReference type="SMART" id="SM00369">
    <property type="entry name" value="LRR_TYP"/>
    <property type="match status" value="4"/>
</dbReference>
<dbReference type="SMART" id="SM00082">
    <property type="entry name" value="LRRCT"/>
    <property type="match status" value="1"/>
</dbReference>
<dbReference type="SUPFAM" id="SSF48726">
    <property type="entry name" value="Immunoglobulin"/>
    <property type="match status" value="1"/>
</dbReference>
<dbReference type="SUPFAM" id="SSF52058">
    <property type="entry name" value="L domain-like"/>
    <property type="match status" value="1"/>
</dbReference>
<dbReference type="PROSITE" id="PS50835">
    <property type="entry name" value="IG_LIKE"/>
    <property type="match status" value="1"/>
</dbReference>
<dbReference type="PROSITE" id="PS51450">
    <property type="entry name" value="LRR"/>
    <property type="match status" value="5"/>
</dbReference>
<evidence type="ECO:0000255" key="1"/>
<evidence type="ECO:0000255" key="2">
    <source>
        <dbReference type="PROSITE-ProRule" id="PRU00114"/>
    </source>
</evidence>
<evidence type="ECO:0000256" key="3">
    <source>
        <dbReference type="SAM" id="MobiDB-lite"/>
    </source>
</evidence>
<evidence type="ECO:0000269" key="4">
    <source>
    </source>
</evidence>
<evidence type="ECO:0000305" key="5"/>
<evidence type="ECO:0007744" key="6">
    <source>
    </source>
</evidence>
<organism>
    <name type="scientific">Mus musculus</name>
    <name type="common">Mouse</name>
    <dbReference type="NCBI Taxonomy" id="10090"/>
    <lineage>
        <taxon>Eukaryota</taxon>
        <taxon>Metazoa</taxon>
        <taxon>Chordata</taxon>
        <taxon>Craniata</taxon>
        <taxon>Vertebrata</taxon>
        <taxon>Euteleostomi</taxon>
        <taxon>Mammalia</taxon>
        <taxon>Eutheria</taxon>
        <taxon>Euarchontoglires</taxon>
        <taxon>Glires</taxon>
        <taxon>Rodentia</taxon>
        <taxon>Myomorpha</taxon>
        <taxon>Muroidea</taxon>
        <taxon>Muridae</taxon>
        <taxon>Murinae</taxon>
        <taxon>Mus</taxon>
        <taxon>Mus</taxon>
    </lineage>
</organism>
<accession>Q5RKR3</accession>
<accession>C8XPY9</accession>
<accession>Q6ZPQ3</accession>
<protein>
    <recommendedName>
        <fullName>Immunoglobulin superfamily containing leucine-rich repeat protein 2</fullName>
    </recommendedName>
    <alternativeName>
        <fullName>Leucine-rich repeat domain and immunoglobulin domain-containing axon extension protein</fullName>
    </alternativeName>
</protein>
<keyword id="KW-1003">Cell membrane</keyword>
<keyword id="KW-0217">Developmental protein</keyword>
<keyword id="KW-1015">Disulfide bond</keyword>
<keyword id="KW-0325">Glycoprotein</keyword>
<keyword id="KW-0393">Immunoglobulin domain</keyword>
<keyword id="KW-0433">Leucine-rich repeat</keyword>
<keyword id="KW-0472">Membrane</keyword>
<keyword id="KW-0524">Neurogenesis</keyword>
<keyword id="KW-0597">Phosphoprotein</keyword>
<keyword id="KW-1185">Reference proteome</keyword>
<keyword id="KW-0677">Repeat</keyword>
<keyword id="KW-0732">Signal</keyword>
<keyword id="KW-0812">Transmembrane</keyword>
<keyword id="KW-1133">Transmembrane helix</keyword>
<gene>
    <name type="primary">Islr2</name>
    <name type="synonym">Kiaa1465</name>
    <name type="synonym">Linx</name>
</gene>
<sequence>MGPFGALCLAWALLGVVRACPEPCACVDKYAHQFADCAYKELREVPEGLPANVTTLSLSANKITVLRRGAFVNVTQVTSLWLAHSEVRTVESGALAVLSQLKNLDLSHNLISNFPWSDLRNLSALQLLKMNHNRLGSLPRDALGALPDLRSLRINNNRLRTLEPGTFDALSALSHLQLYHNPFHCSCGLVWLQAWAASTRVSLPEPDSIACASPPELQGVPVHRLPALPCAPPSVRLSAEPPPEAPGTPLRAGLAFMLHCVAEGHPTPRLQWQLQIPGGTVVLVPPVLSKEEDGGDKVEDGEGDGDEDLPTQTEAPTPTPAPAWPAPPATPRFLALANGSLLVPLLSAKEAGIYTCRAHNELGTNSTSLRVTVAAAGPPKHAPGTGEEPDAQVPTSERKATTKGRSNSVLPFKPEGKTKGQGLARVSVLGEIEAELEETDEGEQMEGQIPADPMGEKHCGHGDPSRYVSNHAFNQSSDLKPHVFELGVIALDVAEREARVQLTPLAARWGPGPDGASGARRPGRRPLRLLYLCPAGGGTAVQWSRVEEGVNAYWFRGLRPGTNYSVCLALAGEACHVQVVFSTKKELPSLLVIVTVSVFLLVLATVPLLGAACCHLLAKHPGKPYRLILRPQAPDPMEKRIAADFDPRASYLESEKSYPARGEAGGEEPEEVPEEGLDEDVEQGDPSGDLQREESLAGCSLVESQSKANQEEFEAGSEYSDRLPLGAEAVNIAQEINGNYRQTAG</sequence>
<comment type="function">
    <text evidence="4">Required for axon extension during neural development.</text>
</comment>
<comment type="subunit">
    <text evidence="4">Homomultimer. Interacts with NTRK1/TrkA.</text>
</comment>
<comment type="subcellular location">
    <subcellularLocation>
        <location evidence="4">Cell membrane</location>
        <topology evidence="4">Single-pass membrane protein</topology>
    </subcellularLocation>
</comment>
<comment type="tissue specificity">
    <text evidence="4">At 11.5 dpc, expressed in spinal nerves, their roots and the ventral spinal cord. At 12.5 dpc, detected in the ventral spinal cord, dorsal root ganglia (DRG), dorsal and ventral roots and sympathetic chain ganglia. At 12.5 dpc, expressed in almost all motor neurons which also express RET and in almost all DRG sensory neurons which also express NTRK1. At 18.5 dpc, expressed only in a subset of NTRK1-expressing neurons but still expressed in nearly all RET-expressing neurons.</text>
</comment>
<comment type="disruption phenotype">
    <text evidence="4">Sensory and motor neuron axonal projection defects.</text>
</comment>
<comment type="sequence caution" evidence="5">
    <conflict type="erroneous initiation">
        <sequence resource="EMBL-CDS" id="BAC98177"/>
    </conflict>
</comment>
<feature type="signal peptide" evidence="1">
    <location>
        <begin position="1"/>
        <end position="19"/>
    </location>
</feature>
<feature type="chain" id="PRO_0000317499" description="Immunoglobulin superfamily containing leucine-rich repeat protein 2">
    <location>
        <begin position="20"/>
        <end position="745"/>
    </location>
</feature>
<feature type="topological domain" description="Extracellular" evidence="1">
    <location>
        <begin position="20"/>
        <end position="589"/>
    </location>
</feature>
<feature type="transmembrane region" description="Helical" evidence="1">
    <location>
        <begin position="590"/>
        <end position="610"/>
    </location>
</feature>
<feature type="topological domain" description="Cytoplasmic" evidence="1">
    <location>
        <begin position="611"/>
        <end position="745"/>
    </location>
</feature>
<feature type="domain" description="LRRNT">
    <location>
        <begin position="20"/>
        <end position="51"/>
    </location>
</feature>
<feature type="repeat" description="LRR 1">
    <location>
        <begin position="52"/>
        <end position="73"/>
    </location>
</feature>
<feature type="repeat" description="LRR 2">
    <location>
        <begin position="76"/>
        <end position="97"/>
    </location>
</feature>
<feature type="repeat" description="LRR 3">
    <location>
        <begin position="100"/>
        <end position="123"/>
    </location>
</feature>
<feature type="repeat" description="LRR 4">
    <location>
        <begin position="124"/>
        <end position="145"/>
    </location>
</feature>
<feature type="repeat" description="LRR 5">
    <location>
        <begin position="148"/>
        <end position="169"/>
    </location>
</feature>
<feature type="domain" description="LRRCT">
    <location>
        <begin position="181"/>
        <end position="232"/>
    </location>
</feature>
<feature type="domain" description="Ig-like">
    <location>
        <begin position="233"/>
        <end position="372"/>
    </location>
</feature>
<feature type="region of interest" description="Disordered" evidence="3">
    <location>
        <begin position="290"/>
        <end position="328"/>
    </location>
</feature>
<feature type="region of interest" description="Disordered" evidence="3">
    <location>
        <begin position="376"/>
        <end position="423"/>
    </location>
</feature>
<feature type="region of interest" description="Disordered" evidence="3">
    <location>
        <begin position="654"/>
        <end position="697"/>
    </location>
</feature>
<feature type="compositionally biased region" description="Basic and acidic residues" evidence="3">
    <location>
        <begin position="290"/>
        <end position="300"/>
    </location>
</feature>
<feature type="compositionally biased region" description="Pro residues" evidence="3">
    <location>
        <begin position="317"/>
        <end position="328"/>
    </location>
</feature>
<feature type="compositionally biased region" description="Acidic residues" evidence="3">
    <location>
        <begin position="665"/>
        <end position="683"/>
    </location>
</feature>
<feature type="modified residue" description="Phosphotyrosine" evidence="6">
    <location>
        <position position="719"/>
    </location>
</feature>
<feature type="modified residue" description="Phosphoserine" evidence="6">
    <location>
        <position position="720"/>
    </location>
</feature>
<feature type="glycosylation site" description="N-linked (GlcNAc...) asparagine" evidence="1">
    <location>
        <position position="52"/>
    </location>
</feature>
<feature type="glycosylation site" description="N-linked (GlcNAc...) asparagine" evidence="1">
    <location>
        <position position="73"/>
    </location>
</feature>
<feature type="glycosylation site" description="N-linked (GlcNAc...) asparagine" evidence="1">
    <location>
        <position position="121"/>
    </location>
</feature>
<feature type="glycosylation site" description="N-linked (GlcNAc...) asparagine" evidence="1">
    <location>
        <position position="338"/>
    </location>
</feature>
<feature type="glycosylation site" description="N-linked (GlcNAc...) asparagine" evidence="1">
    <location>
        <position position="365"/>
    </location>
</feature>
<feature type="glycosylation site" description="N-linked (GlcNAc...) asparagine" evidence="1">
    <location>
        <position position="474"/>
    </location>
</feature>
<feature type="glycosylation site" description="N-linked (GlcNAc...) asparagine" evidence="1">
    <location>
        <position position="563"/>
    </location>
</feature>
<feature type="disulfide bond" evidence="2">
    <location>
        <begin position="260"/>
        <end position="356"/>
    </location>
</feature>
<feature type="sequence conflict" description="In Ref. 2; BAC98177." evidence="5" ref="2">
    <original>G</original>
    <variation>D</variation>
    <location>
        <position position="460"/>
    </location>
</feature>
<proteinExistence type="evidence at protein level"/>
<reference key="1">
    <citation type="journal article" date="2009" name="Neuron">
        <title>LIG family receptor tyrosine kinase-associated proteins modulate growth factor signals during neural development.</title>
        <authorList>
            <person name="Mandai K."/>
            <person name="Guo T."/>
            <person name="StHillaire C."/>
            <person name="Meabon J.S."/>
            <person name="Kanning K.C."/>
            <person name="Bothwell M."/>
            <person name="Ginty D.D."/>
        </authorList>
    </citation>
    <scope>NUCLEOTIDE SEQUENCE [MRNA]</scope>
    <scope>FUNCTION</scope>
    <scope>SUBUNIT</scope>
    <scope>INTERACTION WITH NTRK1</scope>
    <scope>SUBCELLULAR LOCATION</scope>
    <scope>TISSUE SPECIFICITY</scope>
    <scope>DISRUPTION PHENOTYPE</scope>
    <source>
        <strain>C57BL/6J</strain>
    </source>
</reference>
<reference key="2">
    <citation type="journal article" date="2003" name="DNA Res.">
        <title>Prediction of the coding sequences of mouse homologues of KIAA gene: III. The complete nucleotide sequences of 500 mouse KIAA-homologous cDNAs identified by screening of terminal sequences of cDNA clones randomly sampled from size-fractionated libraries.</title>
        <authorList>
            <person name="Okazaki N."/>
            <person name="Kikuno R."/>
            <person name="Ohara R."/>
            <person name="Inamoto S."/>
            <person name="Koseki H."/>
            <person name="Hiraoka S."/>
            <person name="Saga Y."/>
            <person name="Nagase T."/>
            <person name="Ohara O."/>
            <person name="Koga H."/>
        </authorList>
    </citation>
    <scope>NUCLEOTIDE SEQUENCE [LARGE SCALE MRNA]</scope>
    <source>
        <tissue>Fetal brain</tissue>
    </source>
</reference>
<reference key="3">
    <citation type="journal article" date="2004" name="Genome Res.">
        <title>The status, quality, and expansion of the NIH full-length cDNA project: the Mammalian Gene Collection (MGC).</title>
        <authorList>
            <consortium name="The MGC Project Team"/>
        </authorList>
    </citation>
    <scope>NUCLEOTIDE SEQUENCE [LARGE SCALE MRNA]</scope>
    <source>
        <strain>C57BL/6J</strain>
        <tissue>Brain</tissue>
    </source>
</reference>
<reference key="4">
    <citation type="journal article" date="2010" name="Cell">
        <title>A tissue-specific atlas of mouse protein phosphorylation and expression.</title>
        <authorList>
            <person name="Huttlin E.L."/>
            <person name="Jedrychowski M.P."/>
            <person name="Elias J.E."/>
            <person name="Goswami T."/>
            <person name="Rad R."/>
            <person name="Beausoleil S.A."/>
            <person name="Villen J."/>
            <person name="Haas W."/>
            <person name="Sowa M.E."/>
            <person name="Gygi S.P."/>
        </authorList>
    </citation>
    <scope>PHOSPHORYLATION [LARGE SCALE ANALYSIS] AT TYR-719 AND SER-720</scope>
    <scope>IDENTIFICATION BY MASS SPECTROMETRY [LARGE SCALE ANALYSIS]</scope>
    <source>
        <tissue>Brain</tissue>
    </source>
</reference>
<name>ISLR2_MOUSE</name>